<keyword id="KW-0067">ATP-binding</keyword>
<keyword id="KW-0997">Cell inner membrane</keyword>
<keyword id="KW-1003">Cell membrane</keyword>
<keyword id="KW-0472">Membrane</keyword>
<keyword id="KW-0547">Nucleotide-binding</keyword>
<keyword id="KW-1185">Reference proteome</keyword>
<keyword id="KW-0762">Sugar transport</keyword>
<keyword id="KW-1278">Translocase</keyword>
<keyword id="KW-0813">Transport</keyword>
<evidence type="ECO:0000250" key="1">
    <source>
        <dbReference type="UniProtKB" id="P9WQI3"/>
    </source>
</evidence>
<evidence type="ECO:0000255" key="2">
    <source>
        <dbReference type="PROSITE-ProRule" id="PRU00434"/>
    </source>
</evidence>
<evidence type="ECO:0000305" key="3"/>
<proteinExistence type="inferred from homology"/>
<reference key="1">
    <citation type="journal article" date="2002" name="J. Bacteriol.">
        <title>Whole-genome comparison of Mycobacterium tuberculosis clinical and laboratory strains.</title>
        <authorList>
            <person name="Fleischmann R.D."/>
            <person name="Alland D."/>
            <person name="Eisen J.A."/>
            <person name="Carpenter L."/>
            <person name="White O."/>
            <person name="Peterson J.D."/>
            <person name="DeBoy R.T."/>
            <person name="Dodson R.J."/>
            <person name="Gwinn M.L."/>
            <person name="Haft D.H."/>
            <person name="Hickey E.K."/>
            <person name="Kolonay J.F."/>
            <person name="Nelson W.C."/>
            <person name="Umayam L.A."/>
            <person name="Ermolaeva M.D."/>
            <person name="Salzberg S.L."/>
            <person name="Delcher A."/>
            <person name="Utterback T.R."/>
            <person name="Weidman J.F."/>
            <person name="Khouri H.M."/>
            <person name="Gill J."/>
            <person name="Mikula A."/>
            <person name="Bishai W."/>
            <person name="Jacobs W.R. Jr."/>
            <person name="Venter J.C."/>
            <person name="Fraser C.M."/>
        </authorList>
    </citation>
    <scope>NUCLEOTIDE SEQUENCE [LARGE SCALE GENOMIC DNA]</scope>
    <source>
        <strain>CDC 1551 / Oshkosh</strain>
    </source>
</reference>
<name>SUGC_MYCTO</name>
<sequence length="393" mass="42915">MAEIVLDHVNKSYPDGHTAVRDLNLTIADGEFLILVGPSGCGKTTTLNMIAGLEDISSGELRIAGERVNEKAPKDRDIAMVFQSYALYPHMTVRQNIAFPLTLAKMRKADIAQKVSETAKILDLTNLLDRKPSQLSGGQRQRVAMGRAIVRHPKAFLMDEPLSNLDAKLRVQMRGEIAQLQRRLGTTTVYVTHDQTEAMTLGDRVVVMYGGIAQQIGTPEELYERPANLFVAGFIGSPAMNFFPARLTAIGLTLPFGEVTLAPEVQGVIAAHPKPENVIVGVRPEHIQDAALIDAYQRIRALTFQVKVNLVESLGADKYLYFTTESPAVHSVQLDELAEVEGESALHENQFVARVPAESKVAIGQSVELAFDTARLAVFDADSGANLTIPHRA</sequence>
<feature type="chain" id="PRO_0000426771" description="Trehalose import ATP-binding protein SugC">
    <location>
        <begin position="1"/>
        <end position="393"/>
    </location>
</feature>
<feature type="domain" description="ABC transporter" evidence="2">
    <location>
        <begin position="4"/>
        <end position="235"/>
    </location>
</feature>
<feature type="short sequence motif" description="Helical C-loop; LSGGQ motif" evidence="3">
    <location>
        <begin position="135"/>
        <end position="139"/>
    </location>
</feature>
<feature type="binding site" evidence="2">
    <location>
        <begin position="37"/>
        <end position="44"/>
    </location>
    <ligand>
        <name>ATP</name>
        <dbReference type="ChEBI" id="CHEBI:30616"/>
    </ligand>
</feature>
<organism>
    <name type="scientific">Mycobacterium tuberculosis (strain CDC 1551 / Oshkosh)</name>
    <dbReference type="NCBI Taxonomy" id="83331"/>
    <lineage>
        <taxon>Bacteria</taxon>
        <taxon>Bacillati</taxon>
        <taxon>Actinomycetota</taxon>
        <taxon>Actinomycetes</taxon>
        <taxon>Mycobacteriales</taxon>
        <taxon>Mycobacteriaceae</taxon>
        <taxon>Mycobacterium</taxon>
        <taxon>Mycobacterium tuberculosis complex</taxon>
    </lineage>
</organism>
<gene>
    <name type="primary">sugC</name>
    <name type="ordered locus">MT1276</name>
</gene>
<accession>P9WQI2</accession>
<accession>F2GFS4</accession>
<accession>L0T8T0</accession>
<accession>O50454</accession>
<accession>Q7D8J6</accession>
<protein>
    <recommendedName>
        <fullName>Trehalose import ATP-binding protein SugC</fullName>
        <ecNumber evidence="1">7.5.2.-</ecNumber>
    </recommendedName>
    <alternativeName>
        <fullName evidence="3">Nucleotide-binding domain of SugABC transporter</fullName>
        <shortName evidence="3">NBD of SugABC transporter</shortName>
    </alternativeName>
    <alternativeName>
        <fullName evidence="3">SugABC transporter ATPase SugC</fullName>
    </alternativeName>
</protein>
<dbReference type="EC" id="7.5.2.-" evidence="1"/>
<dbReference type="EMBL" id="AE000516">
    <property type="protein sequence ID" value="AAK45534.1"/>
    <property type="molecule type" value="Genomic_DNA"/>
</dbReference>
<dbReference type="PIR" id="E70952">
    <property type="entry name" value="E70952"/>
</dbReference>
<dbReference type="RefSeq" id="WP_003406299.1">
    <property type="nucleotide sequence ID" value="NZ_KK341227.1"/>
</dbReference>
<dbReference type="SMR" id="P9WQI2"/>
<dbReference type="KEGG" id="mtc:MT1276"/>
<dbReference type="PATRIC" id="fig|83331.31.peg.1379"/>
<dbReference type="HOGENOM" id="CLU_000604_1_1_11"/>
<dbReference type="Proteomes" id="UP000001020">
    <property type="component" value="Chromosome"/>
</dbReference>
<dbReference type="GO" id="GO:0055052">
    <property type="term" value="C:ATP-binding cassette (ABC) transporter complex, substrate-binding subunit-containing"/>
    <property type="evidence" value="ECO:0007669"/>
    <property type="project" value="TreeGrafter"/>
</dbReference>
<dbReference type="GO" id="GO:0035796">
    <property type="term" value="C:ATP-binding cassette (ABC) transporter complex, transmembrane substrate-binding subunit-containing"/>
    <property type="evidence" value="ECO:0000250"/>
    <property type="project" value="UniProtKB"/>
</dbReference>
<dbReference type="GO" id="GO:0043211">
    <property type="term" value="F:ABC-type carbohydrate transporter activity"/>
    <property type="evidence" value="ECO:0000250"/>
    <property type="project" value="UniProtKB"/>
</dbReference>
<dbReference type="GO" id="GO:0005524">
    <property type="term" value="F:ATP binding"/>
    <property type="evidence" value="ECO:0000250"/>
    <property type="project" value="UniProtKB"/>
</dbReference>
<dbReference type="GO" id="GO:0016887">
    <property type="term" value="F:ATP hydrolysis activity"/>
    <property type="evidence" value="ECO:0000250"/>
    <property type="project" value="UniProtKB"/>
</dbReference>
<dbReference type="GO" id="GO:0042802">
    <property type="term" value="F:identical protein binding"/>
    <property type="evidence" value="ECO:0000250"/>
    <property type="project" value="UniProtKB"/>
</dbReference>
<dbReference type="GO" id="GO:0042803">
    <property type="term" value="F:protein homodimerization activity"/>
    <property type="evidence" value="ECO:0000250"/>
    <property type="project" value="UniProtKB"/>
</dbReference>
<dbReference type="GO" id="GO:0015574">
    <property type="term" value="F:trehalose transmembrane transporter activity"/>
    <property type="evidence" value="ECO:0000250"/>
    <property type="project" value="UniProtKB"/>
</dbReference>
<dbReference type="CDD" id="cd03301">
    <property type="entry name" value="ABC_MalK_N"/>
    <property type="match status" value="1"/>
</dbReference>
<dbReference type="FunFam" id="3.40.50.300:FF:000042">
    <property type="entry name" value="Maltose/maltodextrin ABC transporter, ATP-binding protein"/>
    <property type="match status" value="1"/>
</dbReference>
<dbReference type="Gene3D" id="2.40.50.100">
    <property type="match status" value="2"/>
</dbReference>
<dbReference type="Gene3D" id="2.40.50.140">
    <property type="entry name" value="Nucleic acid-binding proteins"/>
    <property type="match status" value="1"/>
</dbReference>
<dbReference type="Gene3D" id="3.40.50.300">
    <property type="entry name" value="P-loop containing nucleotide triphosphate hydrolases"/>
    <property type="match status" value="1"/>
</dbReference>
<dbReference type="InterPro" id="IPR003593">
    <property type="entry name" value="AAA+_ATPase"/>
</dbReference>
<dbReference type="InterPro" id="IPR003439">
    <property type="entry name" value="ABC_transporter-like_ATP-bd"/>
</dbReference>
<dbReference type="InterPro" id="IPR017871">
    <property type="entry name" value="ABC_transporter-like_CS"/>
</dbReference>
<dbReference type="InterPro" id="IPR015855">
    <property type="entry name" value="ABC_transpr_MalK-like"/>
</dbReference>
<dbReference type="InterPro" id="IPR047641">
    <property type="entry name" value="ABC_transpr_MalK/UgpC-like"/>
</dbReference>
<dbReference type="InterPro" id="IPR008995">
    <property type="entry name" value="Mo/tungstate-bd_C_term_dom"/>
</dbReference>
<dbReference type="InterPro" id="IPR012340">
    <property type="entry name" value="NA-bd_OB-fold"/>
</dbReference>
<dbReference type="InterPro" id="IPR040582">
    <property type="entry name" value="OB_MalK-like"/>
</dbReference>
<dbReference type="InterPro" id="IPR027417">
    <property type="entry name" value="P-loop_NTPase"/>
</dbReference>
<dbReference type="NCBIfam" id="NF008653">
    <property type="entry name" value="PRK11650.1"/>
    <property type="match status" value="1"/>
</dbReference>
<dbReference type="PANTHER" id="PTHR43875">
    <property type="entry name" value="MALTODEXTRIN IMPORT ATP-BINDING PROTEIN MSMX"/>
    <property type="match status" value="1"/>
</dbReference>
<dbReference type="PANTHER" id="PTHR43875:SF15">
    <property type="entry name" value="TREHALOSE IMPORT ATP-BINDING PROTEIN SUGC"/>
    <property type="match status" value="1"/>
</dbReference>
<dbReference type="Pfam" id="PF00005">
    <property type="entry name" value="ABC_tran"/>
    <property type="match status" value="1"/>
</dbReference>
<dbReference type="Pfam" id="PF17912">
    <property type="entry name" value="OB_MalK"/>
    <property type="match status" value="1"/>
</dbReference>
<dbReference type="SMART" id="SM00382">
    <property type="entry name" value="AAA"/>
    <property type="match status" value="1"/>
</dbReference>
<dbReference type="SUPFAM" id="SSF50331">
    <property type="entry name" value="MOP-like"/>
    <property type="match status" value="1"/>
</dbReference>
<dbReference type="SUPFAM" id="SSF52540">
    <property type="entry name" value="P-loop containing nucleoside triphosphate hydrolases"/>
    <property type="match status" value="1"/>
</dbReference>
<dbReference type="PROSITE" id="PS00211">
    <property type="entry name" value="ABC_TRANSPORTER_1"/>
    <property type="match status" value="1"/>
</dbReference>
<dbReference type="PROSITE" id="PS50893">
    <property type="entry name" value="ABC_TRANSPORTER_2"/>
    <property type="match status" value="1"/>
</dbReference>
<comment type="function">
    <text evidence="1">Part of the ABC transporter complex LpqY-SugA-SugB-SugC, which is highly specific for uptake of trehalose. Involved in the recycling of extracellular trehalose released from trehalose-containing molecules synthesized by M.tuberculosis. Trehalose uptake is essential for virulence. Responsible for energy coupling to the transport system.</text>
</comment>
<comment type="catalytic activity">
    <reaction evidence="1">
        <text>alpha,alpha-trehalose(out) + ATP + H2O = alpha,alpha-trehalose(in) + ADP + phosphate + H(+)</text>
        <dbReference type="Rhea" id="RHEA:75203"/>
        <dbReference type="ChEBI" id="CHEBI:15377"/>
        <dbReference type="ChEBI" id="CHEBI:15378"/>
        <dbReference type="ChEBI" id="CHEBI:16551"/>
        <dbReference type="ChEBI" id="CHEBI:30616"/>
        <dbReference type="ChEBI" id="CHEBI:43474"/>
        <dbReference type="ChEBI" id="CHEBI:456216"/>
    </reaction>
</comment>
<comment type="subunit">
    <text evidence="1">Monomer. Homodimerizes in the presence of ATP. The complex is composed of two ATP-binding proteins (SugC), two transmembrane proteins (SugA and SugB) and a solute-binding protein (LpqY).</text>
</comment>
<comment type="subcellular location">
    <subcellularLocation>
        <location evidence="3">Cell inner membrane</location>
        <topology evidence="3">Peripheral membrane protein</topology>
        <orientation evidence="3">Cytoplasmic side</orientation>
    </subcellularLocation>
</comment>
<comment type="domain">
    <text evidence="1">Contains an N-terminal nucleotide-binding domain (NBD) and a C-terminal regulatory domain (RD).</text>
</comment>
<comment type="similarity">
    <text evidence="3">Belongs to the ABC transporter superfamily.</text>
</comment>